<keyword id="KW-0002">3D-structure</keyword>
<keyword id="KW-0131">Cell cycle</keyword>
<keyword id="KW-0132">Cell division</keyword>
<keyword id="KW-0963">Cytoplasm</keyword>
<keyword id="KW-0903">Direct protein sequencing</keyword>
<keyword id="KW-0498">Mitosis</keyword>
<keyword id="KW-0539">Nucleus</keyword>
<keyword id="KW-1185">Reference proteome</keyword>
<keyword id="KW-0833">Ubl conjugation pathway</keyword>
<dbReference type="EMBL" id="Z48758">
    <property type="protein sequence ID" value="CAA88671.1"/>
    <property type="molecule type" value="Genomic_DNA"/>
</dbReference>
<dbReference type="EMBL" id="BK006938">
    <property type="protein sequence ID" value="DAA11963.1"/>
    <property type="molecule type" value="Genomic_DNA"/>
</dbReference>
<dbReference type="PIR" id="S52683">
    <property type="entry name" value="S52683"/>
</dbReference>
<dbReference type="RefSeq" id="NP_010403.3">
    <property type="nucleotide sequence ID" value="NM_001180426.3"/>
</dbReference>
<dbReference type="PDB" id="8A3T">
    <property type="method" value="EM"/>
    <property type="resolution" value="3.50 A"/>
    <property type="chains" value="Q=1-652"/>
</dbReference>
<dbReference type="PDB" id="8A5Y">
    <property type="method" value="EM"/>
    <property type="resolution" value="4.90 A"/>
    <property type="chains" value="Q=1-652"/>
</dbReference>
<dbReference type="PDB" id="8A61">
    <property type="method" value="EM"/>
    <property type="resolution" value="5.40 A"/>
    <property type="chains" value="Q=1-652"/>
</dbReference>
<dbReference type="PDBsum" id="8A3T"/>
<dbReference type="PDBsum" id="8A5Y"/>
<dbReference type="PDBsum" id="8A61"/>
<dbReference type="EMDB" id="EMD-15123"/>
<dbReference type="EMDB" id="EMD-15199"/>
<dbReference type="EMDB" id="EMD-15201"/>
<dbReference type="SMR" id="Q04601"/>
<dbReference type="BioGRID" id="32174">
    <property type="interactions" value="51"/>
</dbReference>
<dbReference type="ComplexPortal" id="CPX-756">
    <property type="entry name" value="Anaphase-Promoting core complex"/>
</dbReference>
<dbReference type="ComplexPortal" id="CPX-760">
    <property type="entry name" value="Anaphase-Promoting Complex, CDC20 variant"/>
</dbReference>
<dbReference type="ComplexPortal" id="CPX-761">
    <property type="entry name" value="Anaphase-Promoting Complex, CDH1 variant"/>
</dbReference>
<dbReference type="ComplexPortal" id="CPX-762">
    <property type="entry name" value="Anaphase-Promoting complex AMA1 variant"/>
</dbReference>
<dbReference type="DIP" id="DIP-1132N"/>
<dbReference type="FunCoup" id="Q04601">
    <property type="interactions" value="295"/>
</dbReference>
<dbReference type="IntAct" id="Q04601">
    <property type="interactions" value="16"/>
</dbReference>
<dbReference type="MINT" id="Q04601"/>
<dbReference type="STRING" id="4932.YDR118W"/>
<dbReference type="PaxDb" id="4932-YDR118W"/>
<dbReference type="PeptideAtlas" id="Q04601"/>
<dbReference type="EnsemblFungi" id="YDR118W_mRNA">
    <property type="protein sequence ID" value="YDR118W"/>
    <property type="gene ID" value="YDR118W"/>
</dbReference>
<dbReference type="GeneID" id="851696"/>
<dbReference type="KEGG" id="sce:YDR118W"/>
<dbReference type="AGR" id="SGD:S000002525"/>
<dbReference type="SGD" id="S000002525">
    <property type="gene designation" value="APC4"/>
</dbReference>
<dbReference type="VEuPathDB" id="FungiDB:YDR118W"/>
<dbReference type="eggNOG" id="KOG4640">
    <property type="taxonomic scope" value="Eukaryota"/>
</dbReference>
<dbReference type="HOGENOM" id="CLU_030192_0_0_1"/>
<dbReference type="InParanoid" id="Q04601"/>
<dbReference type="OMA" id="PACERII"/>
<dbReference type="OrthoDB" id="2110451at2759"/>
<dbReference type="BioCyc" id="YEAST:G3O-29718-MONOMER"/>
<dbReference type="Reactome" id="R-SCE-983168">
    <property type="pathway name" value="Antigen processing: Ubiquitination &amp; Proteasome degradation"/>
</dbReference>
<dbReference type="UniPathway" id="UPA00143"/>
<dbReference type="BioGRID-ORCS" id="851696">
    <property type="hits" value="1 hit in 10 CRISPR screens"/>
</dbReference>
<dbReference type="PRO" id="PR:Q04601"/>
<dbReference type="Proteomes" id="UP000002311">
    <property type="component" value="Chromosome IV"/>
</dbReference>
<dbReference type="RNAct" id="Q04601">
    <property type="molecule type" value="protein"/>
</dbReference>
<dbReference type="GO" id="GO:0005680">
    <property type="term" value="C:anaphase-promoting complex"/>
    <property type="evidence" value="ECO:0000314"/>
    <property type="project" value="SGD"/>
</dbReference>
<dbReference type="GO" id="GO:0005737">
    <property type="term" value="C:cytoplasm"/>
    <property type="evidence" value="ECO:0007669"/>
    <property type="project" value="UniProtKB-SubCell"/>
</dbReference>
<dbReference type="GO" id="GO:0034399">
    <property type="term" value="C:nuclear periphery"/>
    <property type="evidence" value="ECO:0000314"/>
    <property type="project" value="SGD"/>
</dbReference>
<dbReference type="GO" id="GO:0005634">
    <property type="term" value="C:nucleus"/>
    <property type="evidence" value="ECO:0007005"/>
    <property type="project" value="SGD"/>
</dbReference>
<dbReference type="GO" id="GO:0031145">
    <property type="term" value="P:anaphase-promoting complex-dependent catabolic process"/>
    <property type="evidence" value="ECO:0000314"/>
    <property type="project" value="ComplexPortal"/>
</dbReference>
<dbReference type="GO" id="GO:0051301">
    <property type="term" value="P:cell division"/>
    <property type="evidence" value="ECO:0007669"/>
    <property type="project" value="UniProtKB-KW"/>
</dbReference>
<dbReference type="GO" id="GO:0070979">
    <property type="term" value="P:protein K11-linked ubiquitination"/>
    <property type="evidence" value="ECO:0000318"/>
    <property type="project" value="GO_Central"/>
</dbReference>
<dbReference type="GO" id="GO:0016567">
    <property type="term" value="P:protein ubiquitination"/>
    <property type="evidence" value="ECO:0000314"/>
    <property type="project" value="ComplexPortal"/>
</dbReference>
<dbReference type="GO" id="GO:0051445">
    <property type="term" value="P:regulation of meiotic cell cycle"/>
    <property type="evidence" value="ECO:0000303"/>
    <property type="project" value="ComplexPortal"/>
</dbReference>
<dbReference type="GO" id="GO:0007346">
    <property type="term" value="P:regulation of mitotic cell cycle"/>
    <property type="evidence" value="ECO:0000303"/>
    <property type="project" value="ComplexPortal"/>
</dbReference>
<dbReference type="InterPro" id="IPR024789">
    <property type="entry name" value="APC4"/>
</dbReference>
<dbReference type="InterPro" id="IPR024790">
    <property type="entry name" value="APC4_long_dom"/>
</dbReference>
<dbReference type="PANTHER" id="PTHR13260">
    <property type="entry name" value="ANAPHASE PROMOTING COMPLEX SUBUNIT 4 APC4"/>
    <property type="match status" value="1"/>
</dbReference>
<dbReference type="PANTHER" id="PTHR13260:SF0">
    <property type="entry name" value="ANAPHASE-PROMOTING COMPLEX SUBUNIT 4"/>
    <property type="match status" value="1"/>
</dbReference>
<dbReference type="Pfam" id="PF12896">
    <property type="entry name" value="ANAPC4"/>
    <property type="match status" value="1"/>
</dbReference>
<sequence>MSSPINDYFIDYNPLFPIFATRIAKGLAIYRVSDHARLAVIPIRNINLVANYDWDTTTGKFLSIFFKDGTIRIHDIFKDGRLVSFLRIPSTKISKGIWDRIPLRYEPNNRDFACNIIDDLPKLIRFVKDSKRINIVPYTQPNSLWRGPDEDDLDSNEKLDVHVVFNEGNDKITVFFNGDYAVFLSVDNIENENSLKSIIKVQDGFYQCFYEDGTVQTLNLGPLLQSKSSVNLLNYIMVIKELIGYMLTHLEFINRELATPYLDFVKRLCDEAYGYGKLKSELEALFLLGEISCDLEDWLCNSVGEKNFKRWKYLGCEAYQKTVQILTLIFVPACERIIIYVEKLRAILQAFSIQNKLSYTSDLTAVEVLLKSSQKLLTMTLNSIIGLGRDETLFEKFFIWFNDRLHEALDEDYKLKFQFEDDLYFGYDLLSYFDRILSKKGTEPSSIIDVKLYRDLINSMSDMEKDIAQSNVNSHIQQHILVDLKTDVFAQKYPSSQINLLDAIKLPKHNYIVYLIQVTKHNSAQEPFSEENKKKLYIGTLKDENLGIISKESSVKIPALFKSYRLSSTRFVPNRVHSLLRDIGLSDSNYHSSHVTDYRGENYENEEDDGTIAIPAYIRENRENDDFIACTAKVSVDGRSASLVFPKEKQNV</sequence>
<name>APC4_YEAST</name>
<protein>
    <recommendedName>
        <fullName>Anaphase-promoting complex subunit 4</fullName>
    </recommendedName>
</protein>
<proteinExistence type="evidence at protein level"/>
<accession>Q04601</accession>
<accession>D6VSA3</accession>
<organism>
    <name type="scientific">Saccharomyces cerevisiae (strain ATCC 204508 / S288c)</name>
    <name type="common">Baker's yeast</name>
    <dbReference type="NCBI Taxonomy" id="559292"/>
    <lineage>
        <taxon>Eukaryota</taxon>
        <taxon>Fungi</taxon>
        <taxon>Dikarya</taxon>
        <taxon>Ascomycota</taxon>
        <taxon>Saccharomycotina</taxon>
        <taxon>Saccharomycetes</taxon>
        <taxon>Saccharomycetales</taxon>
        <taxon>Saccharomycetaceae</taxon>
        <taxon>Saccharomyces</taxon>
    </lineage>
</organism>
<gene>
    <name type="primary">APC4</name>
    <name type="ordered locus">YDR118W</name>
</gene>
<feature type="chain" id="PRO_0000064623" description="Anaphase-promoting complex subunit 4">
    <location>
        <begin position="1"/>
        <end position="652"/>
    </location>
</feature>
<feature type="strand" evidence="4">
    <location>
        <begin position="14"/>
        <end position="23"/>
    </location>
</feature>
<feature type="strand" evidence="4">
    <location>
        <begin position="26"/>
        <end position="31"/>
    </location>
</feature>
<feature type="turn" evidence="4">
    <location>
        <begin position="32"/>
        <end position="34"/>
    </location>
</feature>
<feature type="strand" evidence="4">
    <location>
        <begin position="37"/>
        <end position="42"/>
    </location>
</feature>
<feature type="helix" evidence="4">
    <location>
        <begin position="46"/>
        <end position="48"/>
    </location>
</feature>
<feature type="strand" evidence="4">
    <location>
        <begin position="49"/>
        <end position="54"/>
    </location>
</feature>
<feature type="strand" evidence="4">
    <location>
        <begin position="56"/>
        <end position="58"/>
    </location>
</feature>
<feature type="strand" evidence="4">
    <location>
        <begin position="60"/>
        <end position="75"/>
    </location>
</feature>
<feature type="turn" evidence="4">
    <location>
        <begin position="76"/>
        <end position="79"/>
    </location>
</feature>
<feature type="strand" evidence="4">
    <location>
        <begin position="82"/>
        <end position="87"/>
    </location>
</feature>
<feature type="strand" evidence="4">
    <location>
        <begin position="94"/>
        <end position="102"/>
    </location>
</feature>
<feature type="turn" evidence="4">
    <location>
        <begin position="117"/>
        <end position="119"/>
    </location>
</feature>
<feature type="strand" evidence="4">
    <location>
        <begin position="124"/>
        <end position="128"/>
    </location>
</feature>
<feature type="strand" evidence="4">
    <location>
        <begin position="130"/>
        <end position="137"/>
    </location>
</feature>
<feature type="turn" evidence="4">
    <location>
        <begin position="144"/>
        <end position="146"/>
    </location>
</feature>
<feature type="strand" evidence="4">
    <location>
        <begin position="158"/>
        <end position="166"/>
    </location>
</feature>
<feature type="turn" evidence="4">
    <location>
        <begin position="167"/>
        <end position="170"/>
    </location>
</feature>
<feature type="strand" evidence="4">
    <location>
        <begin position="171"/>
        <end position="176"/>
    </location>
</feature>
<feature type="turn" evidence="4">
    <location>
        <begin position="177"/>
        <end position="179"/>
    </location>
</feature>
<feature type="strand" evidence="4">
    <location>
        <begin position="180"/>
        <end position="184"/>
    </location>
</feature>
<feature type="strand" evidence="4">
    <location>
        <begin position="195"/>
        <end position="202"/>
    </location>
</feature>
<feature type="strand" evidence="4">
    <location>
        <begin position="205"/>
        <end position="210"/>
    </location>
</feature>
<feature type="strand" evidence="4">
    <location>
        <begin position="215"/>
        <end position="219"/>
    </location>
</feature>
<feature type="helix" evidence="4">
    <location>
        <begin position="221"/>
        <end position="225"/>
    </location>
</feature>
<feature type="helix" evidence="4">
    <location>
        <begin position="227"/>
        <end position="256"/>
    </location>
</feature>
<feature type="helix" evidence="4">
    <location>
        <begin position="258"/>
        <end position="269"/>
    </location>
</feature>
<feature type="turn" evidence="4">
    <location>
        <begin position="270"/>
        <end position="273"/>
    </location>
</feature>
<feature type="helix" evidence="4">
    <location>
        <begin position="275"/>
        <end position="287"/>
    </location>
</feature>
<feature type="helix" evidence="4">
    <location>
        <begin position="293"/>
        <end position="300"/>
    </location>
</feature>
<feature type="turn" evidence="4">
    <location>
        <begin position="301"/>
        <end position="303"/>
    </location>
</feature>
<feature type="helix" evidence="4">
    <location>
        <begin position="304"/>
        <end position="328"/>
    </location>
</feature>
<feature type="helix" evidence="4">
    <location>
        <begin position="330"/>
        <end position="354"/>
    </location>
</feature>
<feature type="helix" evidence="4">
    <location>
        <begin position="364"/>
        <end position="410"/>
    </location>
</feature>
<feature type="helix" evidence="4">
    <location>
        <begin position="419"/>
        <end position="421"/>
    </location>
</feature>
<feature type="helix" evidence="4">
    <location>
        <begin position="425"/>
        <end position="436"/>
    </location>
</feature>
<feature type="helix" evidence="4">
    <location>
        <begin position="439"/>
        <end position="442"/>
    </location>
</feature>
<feature type="helix" evidence="4">
    <location>
        <begin position="444"/>
        <end position="446"/>
    </location>
</feature>
<feature type="helix" evidence="4">
    <location>
        <begin position="450"/>
        <end position="470"/>
    </location>
</feature>
<feature type="helix" evidence="4">
    <location>
        <begin position="472"/>
        <end position="479"/>
    </location>
</feature>
<feature type="strand" evidence="4">
    <location>
        <begin position="481"/>
        <end position="486"/>
    </location>
</feature>
<feature type="turn" evidence="4">
    <location>
        <begin position="489"/>
        <end position="492"/>
    </location>
</feature>
<feature type="strand" evidence="4">
    <location>
        <begin position="494"/>
        <end position="505"/>
    </location>
</feature>
<feature type="strand" evidence="4">
    <location>
        <begin position="511"/>
        <end position="520"/>
    </location>
</feature>
<feature type="strand" evidence="4">
    <location>
        <begin position="538"/>
        <end position="542"/>
    </location>
</feature>
<feature type="turn" evidence="4">
    <location>
        <begin position="543"/>
        <end position="545"/>
    </location>
</feature>
<feature type="helix" evidence="4">
    <location>
        <begin position="559"/>
        <end position="561"/>
    </location>
</feature>
<feature type="helix" evidence="4">
    <location>
        <begin position="566"/>
        <end position="568"/>
    </location>
</feature>
<feature type="helix" evidence="4">
    <location>
        <begin position="577"/>
        <end position="585"/>
    </location>
</feature>
<feature type="strand" evidence="4">
    <location>
        <begin position="588"/>
        <end position="592"/>
    </location>
</feature>
<feature type="strand" evidence="4">
    <location>
        <begin position="618"/>
        <end position="624"/>
    </location>
</feature>
<feature type="strand" evidence="4">
    <location>
        <begin position="626"/>
        <end position="628"/>
    </location>
</feature>
<feature type="strand" evidence="4">
    <location>
        <begin position="643"/>
        <end position="645"/>
    </location>
</feature>
<reference key="1">
    <citation type="journal article" date="1997" name="Nature">
        <title>The nucleotide sequence of Saccharomyces cerevisiae chromosome IV.</title>
        <authorList>
            <person name="Jacq C."/>
            <person name="Alt-Moerbe J."/>
            <person name="Andre B."/>
            <person name="Arnold W."/>
            <person name="Bahr A."/>
            <person name="Ballesta J.P.G."/>
            <person name="Bargues M."/>
            <person name="Baron L."/>
            <person name="Becker A."/>
            <person name="Biteau N."/>
            <person name="Bloecker H."/>
            <person name="Blugeon C."/>
            <person name="Boskovic J."/>
            <person name="Brandt P."/>
            <person name="Brueckner M."/>
            <person name="Buitrago M.J."/>
            <person name="Coster F."/>
            <person name="Delaveau T."/>
            <person name="del Rey F."/>
            <person name="Dujon B."/>
            <person name="Eide L.G."/>
            <person name="Garcia-Cantalejo J.M."/>
            <person name="Goffeau A."/>
            <person name="Gomez-Peris A."/>
            <person name="Granotier C."/>
            <person name="Hanemann V."/>
            <person name="Hankeln T."/>
            <person name="Hoheisel J.D."/>
            <person name="Jaeger W."/>
            <person name="Jimenez A."/>
            <person name="Jonniaux J.-L."/>
            <person name="Kraemer C."/>
            <person name="Kuester H."/>
            <person name="Laamanen P."/>
            <person name="Legros Y."/>
            <person name="Louis E.J."/>
            <person name="Moeller-Rieker S."/>
            <person name="Monnet A."/>
            <person name="Moro M."/>
            <person name="Mueller-Auer S."/>
            <person name="Nussbaumer B."/>
            <person name="Paricio N."/>
            <person name="Paulin L."/>
            <person name="Perea J."/>
            <person name="Perez-Alonso M."/>
            <person name="Perez-Ortin J.E."/>
            <person name="Pohl T.M."/>
            <person name="Prydz H."/>
            <person name="Purnelle B."/>
            <person name="Rasmussen S.W."/>
            <person name="Remacha M.A."/>
            <person name="Revuelta J.L."/>
            <person name="Rieger M."/>
            <person name="Salom D."/>
            <person name="Saluz H.P."/>
            <person name="Saiz J.E."/>
            <person name="Saren A.-M."/>
            <person name="Schaefer M."/>
            <person name="Scharfe M."/>
            <person name="Schmidt E.R."/>
            <person name="Schneider C."/>
            <person name="Scholler P."/>
            <person name="Schwarz S."/>
            <person name="Soler-Mira A."/>
            <person name="Urrestarazu L.A."/>
            <person name="Verhasselt P."/>
            <person name="Vissers S."/>
            <person name="Voet M."/>
            <person name="Volckaert G."/>
            <person name="Wagner G."/>
            <person name="Wambutt R."/>
            <person name="Wedler E."/>
            <person name="Wedler H."/>
            <person name="Woelfl S."/>
            <person name="Harris D.E."/>
            <person name="Bowman S."/>
            <person name="Brown D."/>
            <person name="Churcher C.M."/>
            <person name="Connor R."/>
            <person name="Dedman K."/>
            <person name="Gentles S."/>
            <person name="Hamlin N."/>
            <person name="Hunt S."/>
            <person name="Jones L."/>
            <person name="McDonald S."/>
            <person name="Murphy L.D."/>
            <person name="Niblett D."/>
            <person name="Odell C."/>
            <person name="Oliver K."/>
            <person name="Rajandream M.A."/>
            <person name="Richards C."/>
            <person name="Shore L."/>
            <person name="Walsh S.V."/>
            <person name="Barrell B.G."/>
            <person name="Dietrich F.S."/>
            <person name="Mulligan J.T."/>
            <person name="Allen E."/>
            <person name="Araujo R."/>
            <person name="Aviles E."/>
            <person name="Berno A."/>
            <person name="Carpenter J."/>
            <person name="Chen E."/>
            <person name="Cherry J.M."/>
            <person name="Chung E."/>
            <person name="Duncan M."/>
            <person name="Hunicke-Smith S."/>
            <person name="Hyman R.W."/>
            <person name="Komp C."/>
            <person name="Lashkari D."/>
            <person name="Lew H."/>
            <person name="Lin D."/>
            <person name="Mosedale D."/>
            <person name="Nakahara K."/>
            <person name="Namath A."/>
            <person name="Oefner P."/>
            <person name="Oh C."/>
            <person name="Petel F.X."/>
            <person name="Roberts D."/>
            <person name="Schramm S."/>
            <person name="Schroeder M."/>
            <person name="Shogren T."/>
            <person name="Shroff N."/>
            <person name="Winant A."/>
            <person name="Yelton M.A."/>
            <person name="Botstein D."/>
            <person name="Davis R.W."/>
            <person name="Johnston M."/>
            <person name="Andrews S."/>
            <person name="Brinkman R."/>
            <person name="Cooper J."/>
            <person name="Ding H."/>
            <person name="Du Z."/>
            <person name="Favello A."/>
            <person name="Fulton L."/>
            <person name="Gattung S."/>
            <person name="Greco T."/>
            <person name="Hallsworth K."/>
            <person name="Hawkins J."/>
            <person name="Hillier L.W."/>
            <person name="Jier M."/>
            <person name="Johnson D."/>
            <person name="Johnston L."/>
            <person name="Kirsten J."/>
            <person name="Kucaba T."/>
            <person name="Langston Y."/>
            <person name="Latreille P."/>
            <person name="Le T."/>
            <person name="Mardis E."/>
            <person name="Menezes S."/>
            <person name="Miller N."/>
            <person name="Nhan M."/>
            <person name="Pauley A."/>
            <person name="Peluso D."/>
            <person name="Rifkin L."/>
            <person name="Riles L."/>
            <person name="Taich A."/>
            <person name="Trevaskis E."/>
            <person name="Vignati D."/>
            <person name="Wilcox L."/>
            <person name="Wohldman P."/>
            <person name="Vaudin M."/>
            <person name="Wilson R."/>
            <person name="Waterston R."/>
            <person name="Albermann K."/>
            <person name="Hani J."/>
            <person name="Heumann K."/>
            <person name="Kleine K."/>
            <person name="Mewes H.-W."/>
            <person name="Zollner A."/>
            <person name="Zaccaria P."/>
        </authorList>
    </citation>
    <scope>NUCLEOTIDE SEQUENCE [LARGE SCALE GENOMIC DNA]</scope>
    <source>
        <strain>ATCC 204508 / S288c</strain>
    </source>
</reference>
<reference key="2">
    <citation type="journal article" date="2014" name="G3 (Bethesda)">
        <title>The reference genome sequence of Saccharomyces cerevisiae: Then and now.</title>
        <authorList>
            <person name="Engel S.R."/>
            <person name="Dietrich F.S."/>
            <person name="Fisk D.G."/>
            <person name="Binkley G."/>
            <person name="Balakrishnan R."/>
            <person name="Costanzo M.C."/>
            <person name="Dwight S.S."/>
            <person name="Hitz B.C."/>
            <person name="Karra K."/>
            <person name="Nash R.S."/>
            <person name="Weng S."/>
            <person name="Wong E.D."/>
            <person name="Lloyd P."/>
            <person name="Skrzypek M.S."/>
            <person name="Miyasato S.R."/>
            <person name="Simison M."/>
            <person name="Cherry J.M."/>
        </authorList>
    </citation>
    <scope>GENOME REANNOTATION</scope>
    <source>
        <strain>ATCC 204508 / S288c</strain>
    </source>
</reference>
<reference key="3">
    <citation type="journal article" date="1998" name="Science">
        <title>Mass spectrometric analysis of the anaphase-promoting complex from yeast: identification of a subunit related to cullins.</title>
        <authorList>
            <person name="Zachariae W."/>
            <person name="Shevchenko A."/>
            <person name="Andrews P.D."/>
            <person name="Ciosk R."/>
            <person name="Galova M."/>
            <person name="Stark M.J."/>
            <person name="Mann M."/>
            <person name="Nasmyth K."/>
        </authorList>
    </citation>
    <scope>PROTEIN SEQUENCE OF 38-44 AND 337-343</scope>
    <scope>SUBUNIT</scope>
    <scope>IDENTIFICATION BY MASS SPECTROMETRY</scope>
</reference>
<reference key="4">
    <citation type="journal article" date="2003" name="Nature">
        <title>Global analysis of protein localization in budding yeast.</title>
        <authorList>
            <person name="Huh W.-K."/>
            <person name="Falvo J.V."/>
            <person name="Gerke L.C."/>
            <person name="Carroll A.S."/>
            <person name="Howson R.W."/>
            <person name="Weissman J.S."/>
            <person name="O'Shea E.K."/>
        </authorList>
    </citation>
    <scope>SUBCELLULAR LOCATION [LARGE SCALE ANALYSIS]</scope>
</reference>
<reference key="5">
    <citation type="journal article" date="2003" name="Nature">
        <title>Global analysis of protein expression in yeast.</title>
        <authorList>
            <person name="Ghaemmaghami S."/>
            <person name="Huh W.-K."/>
            <person name="Bower K."/>
            <person name="Howson R.W."/>
            <person name="Belle A."/>
            <person name="Dephoure N."/>
            <person name="O'Shea E.K."/>
            <person name="Weissman J.S."/>
        </authorList>
    </citation>
    <scope>LEVEL OF PROTEIN EXPRESSION [LARGE SCALE ANALYSIS]</scope>
</reference>
<comment type="function">
    <text>Component of the anaphase promoting complex/cyclosome (APC/C), a cell cycle-regulated E3 ubiquitin-protein ligase complex that controls progression through mitosis and the G1 phase of the cell cycle. The APC/C is thought to confer substrate specificity and, in the presence of ubiquitin-conjugating E2 enzymes, it catalyzes the formation of protein-ubiquitin conjugates that are subsequently degraded by the 26S proteasome. In early mitosis, the APC/C is activated by CDC20 and targets securin PDS1, the B-type cyclin CLB5, and other anaphase inhibitory proteins for proteolysis, thereby triggering the separation of sister chromatids at the metaphase-to-anaphase transition. In late mitosis and in G1, degradation of CLB5 allows activation of the APC/C by CDH1, which is needed to destroy CDC20 and the B-type cyclin CLB2 to allow exit from mitosis and creating the low CDK state necessary for cytokinesis and for reforming prereplicative complexes in G1 prior to another round of replication.</text>
</comment>
<comment type="pathway">
    <text>Protein modification; protein ubiquitination.</text>
</comment>
<comment type="subunit">
    <text evidence="3">The APC/C is composed of at least 13 subunits that stay tightly associated throughout the cell cycle: APC1, APC2, APC4, APC5, APC9, APC11, CDC16, CDC23, CDC26, CDC27, DOC1, MND2 and SWM1.</text>
</comment>
<comment type="interaction">
    <interactant intactId="EBI-32842">
        <id>Q04601</id>
    </interactant>
    <interactant intactId="EBI-35371">
        <id>Q08683</id>
        <label>APC5</label>
    </interactant>
    <organismsDiffer>false</organismsDiffer>
    <experiments>8</experiments>
</comment>
<comment type="interaction">
    <interactant intactId="EBI-32842">
        <id>Q04601</id>
    </interactant>
    <interactant intactId="EBI-25433">
        <id>P40577</id>
        <label>MND2</label>
    </interactant>
    <organismsDiffer>false</organismsDiffer>
    <experiments>6</experiments>
</comment>
<comment type="interaction">
    <interactant intactId="EBI-32842">
        <id>Q04601</id>
    </interactant>
    <interactant intactId="EBI-33330">
        <id>Q12379</id>
        <label>SWM1</label>
    </interactant>
    <organismsDiffer>false</organismsDiffer>
    <experiments>6</experiments>
</comment>
<comment type="subcellular location">
    <subcellularLocation>
        <location evidence="1">Cytoplasm</location>
    </subcellularLocation>
    <subcellularLocation>
        <location evidence="1">Nucleus</location>
    </subcellularLocation>
</comment>
<comment type="miscellaneous">
    <text evidence="2">Present with 1332 molecules/cell in log phase SD medium.</text>
</comment>
<evidence type="ECO:0000269" key="1">
    <source>
    </source>
</evidence>
<evidence type="ECO:0000269" key="2">
    <source>
    </source>
</evidence>
<evidence type="ECO:0000269" key="3">
    <source>
    </source>
</evidence>
<evidence type="ECO:0007829" key="4">
    <source>
        <dbReference type="PDB" id="8A3T"/>
    </source>
</evidence>